<proteinExistence type="uncertain"/>
<comment type="subcellular location">
    <subcellularLocation>
        <location evidence="3">Membrane</location>
        <topology evidence="3">Single-pass membrane protein</topology>
    </subcellularLocation>
</comment>
<comment type="disruption phenotype">
    <text evidence="2">Displays increased levels of spontaneous RAD52 foci in proliferating diploid cells.</text>
</comment>
<comment type="miscellaneous">
    <text evidence="3">Partially overlaps YOR012W. Disruption phenotypes caused by deletion of this gene may also be a result of a defect in its overlapping gene.</text>
</comment>
<comment type="caution">
    <text evidence="4">Product of a dubious gene prediction unlikely to encode a functional protein. Because of that it is not part of the S.cerevisiae S288c complete/reference proteome set.</text>
</comment>
<feature type="chain" id="PRO_0000299700" description="Putative increased recombination centers protein 11">
    <location>
        <begin position="1"/>
        <end position="156"/>
    </location>
</feature>
<feature type="transmembrane region" description="Helical" evidence="1">
    <location>
        <begin position="20"/>
        <end position="42"/>
    </location>
</feature>
<gene>
    <name type="primary">IRC11</name>
    <name type="ordered locus">YOR013W</name>
    <name type="ORF">O2612</name>
    <name type="ORF">OR26.03</name>
    <name type="ORF">YOL303.3</name>
</gene>
<reference key="1">
    <citation type="journal article" date="1997" name="Nature">
        <title>The nucleotide sequence of Saccharomyces cerevisiae chromosome XV.</title>
        <authorList>
            <person name="Dujon B."/>
            <person name="Albermann K."/>
            <person name="Aldea M."/>
            <person name="Alexandraki D."/>
            <person name="Ansorge W."/>
            <person name="Arino J."/>
            <person name="Benes V."/>
            <person name="Bohn C."/>
            <person name="Bolotin-Fukuhara M."/>
            <person name="Bordonne R."/>
            <person name="Boyer J."/>
            <person name="Camasses A."/>
            <person name="Casamayor A."/>
            <person name="Casas C."/>
            <person name="Cheret G."/>
            <person name="Cziepluch C."/>
            <person name="Daignan-Fornier B."/>
            <person name="Dang V.-D."/>
            <person name="de Haan M."/>
            <person name="Delius H."/>
            <person name="Durand P."/>
            <person name="Fairhead C."/>
            <person name="Feldmann H."/>
            <person name="Gaillon L."/>
            <person name="Galisson F."/>
            <person name="Gamo F.-J."/>
            <person name="Gancedo C."/>
            <person name="Goffeau A."/>
            <person name="Goulding S.E."/>
            <person name="Grivell L.A."/>
            <person name="Habbig B."/>
            <person name="Hand N.J."/>
            <person name="Hani J."/>
            <person name="Hattenhorst U."/>
            <person name="Hebling U."/>
            <person name="Hernando Y."/>
            <person name="Herrero E."/>
            <person name="Heumann K."/>
            <person name="Hiesel R."/>
            <person name="Hilger F."/>
            <person name="Hofmann B."/>
            <person name="Hollenberg C.P."/>
            <person name="Hughes B."/>
            <person name="Jauniaux J.-C."/>
            <person name="Kalogeropoulos A."/>
            <person name="Katsoulou C."/>
            <person name="Kordes E."/>
            <person name="Lafuente M.J."/>
            <person name="Landt O."/>
            <person name="Louis E.J."/>
            <person name="Maarse A.C."/>
            <person name="Madania A."/>
            <person name="Mannhaupt G."/>
            <person name="Marck C."/>
            <person name="Martin R.P."/>
            <person name="Mewes H.-W."/>
            <person name="Michaux G."/>
            <person name="Paces V."/>
            <person name="Parle-McDermott A.G."/>
            <person name="Pearson B.M."/>
            <person name="Perrin A."/>
            <person name="Pettersson B."/>
            <person name="Poch O."/>
            <person name="Pohl T.M."/>
            <person name="Poirey R."/>
            <person name="Portetelle D."/>
            <person name="Pujol A."/>
            <person name="Purnelle B."/>
            <person name="Ramezani Rad M."/>
            <person name="Rechmann S."/>
            <person name="Schwager C."/>
            <person name="Schweizer M."/>
            <person name="Sor F."/>
            <person name="Sterky F."/>
            <person name="Tarassov I.A."/>
            <person name="Teodoru C."/>
            <person name="Tettelin H."/>
            <person name="Thierry A."/>
            <person name="Tobiasch E."/>
            <person name="Tzermia M."/>
            <person name="Uhlen M."/>
            <person name="Unseld M."/>
            <person name="Valens M."/>
            <person name="Vandenbol M."/>
            <person name="Vetter I."/>
            <person name="Vlcek C."/>
            <person name="Voet M."/>
            <person name="Volckaert G."/>
            <person name="Voss H."/>
            <person name="Wambutt R."/>
            <person name="Wedler H."/>
            <person name="Wiemann S."/>
            <person name="Winsor B."/>
            <person name="Wolfe K.H."/>
            <person name="Zollner A."/>
            <person name="Zumstein E."/>
            <person name="Kleine K."/>
        </authorList>
    </citation>
    <scope>NUCLEOTIDE SEQUENCE [LARGE SCALE GENOMIC DNA]</scope>
    <source>
        <strain>ATCC 204508 / S288c</strain>
    </source>
</reference>
<reference key="2">
    <citation type="journal article" date="2014" name="G3 (Bethesda)">
        <title>The reference genome sequence of Saccharomyces cerevisiae: Then and now.</title>
        <authorList>
            <person name="Engel S.R."/>
            <person name="Dietrich F.S."/>
            <person name="Fisk D.G."/>
            <person name="Binkley G."/>
            <person name="Balakrishnan R."/>
            <person name="Costanzo M.C."/>
            <person name="Dwight S.S."/>
            <person name="Hitz B.C."/>
            <person name="Karra K."/>
            <person name="Nash R.S."/>
            <person name="Weng S."/>
            <person name="Wong E.D."/>
            <person name="Lloyd P."/>
            <person name="Skrzypek M.S."/>
            <person name="Miyasato S.R."/>
            <person name="Simison M."/>
            <person name="Cherry J.M."/>
        </authorList>
    </citation>
    <scope>GENOME REANNOTATION</scope>
    <source>
        <strain>ATCC 204508 / S288c</strain>
    </source>
</reference>
<reference key="3">
    <citation type="journal article" date="2007" name="PLoS Genet.">
        <title>Genome-wide analysis of Rad52 foci reveals diverse mechanisms impacting recombination.</title>
        <authorList>
            <person name="Alvaro D."/>
            <person name="Lisby M."/>
            <person name="Rothstein R."/>
        </authorList>
    </citation>
    <scope>DISRUPTION PHENOTYPE</scope>
</reference>
<organism>
    <name type="scientific">Saccharomyces cerevisiae (strain ATCC 204508 / S288c)</name>
    <name type="common">Baker's yeast</name>
    <dbReference type="NCBI Taxonomy" id="559292"/>
    <lineage>
        <taxon>Eukaryota</taxon>
        <taxon>Fungi</taxon>
        <taxon>Dikarya</taxon>
        <taxon>Ascomycota</taxon>
        <taxon>Saccharomycotina</taxon>
        <taxon>Saccharomycetes</taxon>
        <taxon>Saccharomycetales</taxon>
        <taxon>Saccharomycetaceae</taxon>
        <taxon>Saccharomyces</taxon>
    </lineage>
</organism>
<dbReference type="EMBL" id="X87331">
    <property type="protein sequence ID" value="CAA60762.1"/>
    <property type="molecule type" value="Genomic_DNA"/>
</dbReference>
<dbReference type="EMBL" id="Z74920">
    <property type="protein sequence ID" value="CAA99201.1"/>
    <property type="molecule type" value="Genomic_DNA"/>
</dbReference>
<dbReference type="EMBL" id="Z74922">
    <property type="protein sequence ID" value="CAA99204.1"/>
    <property type="molecule type" value="Genomic_DNA"/>
</dbReference>
<dbReference type="PIR" id="S54619">
    <property type="entry name" value="S54619"/>
</dbReference>
<dbReference type="SMR" id="Q12479"/>
<dbReference type="DIP" id="DIP-8966N"/>
<dbReference type="IntAct" id="Q12479">
    <property type="interactions" value="1"/>
</dbReference>
<dbReference type="MINT" id="Q12479"/>
<dbReference type="STRING" id="4932.YOR013W"/>
<dbReference type="PaxDb" id="4932-YOR013W"/>
<dbReference type="EnsemblFungi" id="YOR013W_mRNA">
    <property type="protein sequence ID" value="YOR013W"/>
    <property type="gene ID" value="YOR013W"/>
</dbReference>
<dbReference type="AGR" id="SGD:S000005539"/>
<dbReference type="SGD" id="S000005539">
    <property type="gene designation" value="IRC11"/>
</dbReference>
<dbReference type="eggNOG" id="ENOG502RYMB">
    <property type="taxonomic scope" value="Eukaryota"/>
</dbReference>
<dbReference type="GeneTree" id="ENSGT00940000176382"/>
<dbReference type="HOGENOM" id="CLU_142437_0_0_1"/>
<dbReference type="OMA" id="RQMISMQ"/>
<dbReference type="GO" id="GO:0016020">
    <property type="term" value="C:membrane"/>
    <property type="evidence" value="ECO:0007669"/>
    <property type="project" value="UniProtKB-SubCell"/>
</dbReference>
<dbReference type="GO" id="GO:0006312">
    <property type="term" value="P:mitotic recombination"/>
    <property type="evidence" value="ECO:0000315"/>
    <property type="project" value="SGD"/>
</dbReference>
<dbReference type="Gene3D" id="3.40.630.30">
    <property type="match status" value="1"/>
</dbReference>
<dbReference type="InterPro" id="IPR052564">
    <property type="entry name" value="N-acetyltrans/Recomb-assoc"/>
</dbReference>
<dbReference type="PANTHER" id="PTHR43451:SF1">
    <property type="entry name" value="ACETYLTRANSFERASE"/>
    <property type="match status" value="1"/>
</dbReference>
<dbReference type="PANTHER" id="PTHR43451">
    <property type="entry name" value="ACETYLTRANSFERASE (GNAT) FAMILY PROTEIN"/>
    <property type="match status" value="1"/>
</dbReference>
<evidence type="ECO:0000255" key="1"/>
<evidence type="ECO:0000269" key="2">
    <source>
    </source>
</evidence>
<evidence type="ECO:0000305" key="3"/>
<evidence type="ECO:0000305" key="4">
    <source>
    </source>
</evidence>
<keyword id="KW-0472">Membrane</keyword>
<keyword id="KW-0812">Transmembrane</keyword>
<keyword id="KW-1133">Transmembrane helix</keyword>
<protein>
    <recommendedName>
        <fullName>Putative increased recombination centers protein 11</fullName>
    </recommendedName>
</protein>
<name>IRC11_YEAST</name>
<accession>Q12479</accession>
<accession>O13593</accession>
<sequence length="156" mass="17881">MTWMVKLLRQMISMQSQYGAALGATCLLHYLTTSLSIRFFFHDLTVRKHEVMPLGMDYYYLYAIGKDPSHPEIRGSVRKILEKYKTKADKANCALALEAISEHARSVYEYFGFKTYLVFQFGVGEVNSKGEPDPQGKGFTAYLMLYHKDADTIFHA</sequence>